<proteinExistence type="inferred from homology"/>
<protein>
    <recommendedName>
        <fullName evidence="1">Uroporphyrinogen decarboxylase</fullName>
        <shortName evidence="1">UPD</shortName>
        <shortName evidence="1">URO-D</shortName>
        <ecNumber evidence="1">4.1.1.37</ecNumber>
    </recommendedName>
</protein>
<reference key="1">
    <citation type="journal article" date="2006" name="Mol. Microbiol.">
        <title>Role of pathogenicity island-associated integrases in the genome plasticity of uropathogenic Escherichia coli strain 536.</title>
        <authorList>
            <person name="Hochhut B."/>
            <person name="Wilde C."/>
            <person name="Balling G."/>
            <person name="Middendorf B."/>
            <person name="Dobrindt U."/>
            <person name="Brzuszkiewicz E."/>
            <person name="Gottschalk G."/>
            <person name="Carniel E."/>
            <person name="Hacker J."/>
        </authorList>
    </citation>
    <scope>NUCLEOTIDE SEQUENCE [LARGE SCALE GENOMIC DNA]</scope>
    <source>
        <strain>536 / UPEC</strain>
    </source>
</reference>
<feature type="chain" id="PRO_1000023903" description="Uroporphyrinogen decarboxylase">
    <location>
        <begin position="1"/>
        <end position="354"/>
    </location>
</feature>
<feature type="binding site" evidence="1">
    <location>
        <begin position="27"/>
        <end position="31"/>
    </location>
    <ligand>
        <name>substrate</name>
    </ligand>
</feature>
<feature type="binding site" evidence="1">
    <location>
        <position position="77"/>
    </location>
    <ligand>
        <name>substrate</name>
    </ligand>
</feature>
<feature type="binding site" evidence="1">
    <location>
        <position position="154"/>
    </location>
    <ligand>
        <name>substrate</name>
    </ligand>
</feature>
<feature type="binding site" evidence="1">
    <location>
        <position position="209"/>
    </location>
    <ligand>
        <name>substrate</name>
    </ligand>
</feature>
<feature type="binding site" evidence="1">
    <location>
        <position position="327"/>
    </location>
    <ligand>
        <name>substrate</name>
    </ligand>
</feature>
<feature type="site" description="Transition state stabilizer" evidence="1">
    <location>
        <position position="77"/>
    </location>
</feature>
<gene>
    <name evidence="1" type="primary">hemE</name>
    <name type="ordered locus">ECP_4210</name>
</gene>
<comment type="function">
    <text evidence="1">Catalyzes the decarboxylation of four acetate groups of uroporphyrinogen-III to yield coproporphyrinogen-III.</text>
</comment>
<comment type="catalytic activity">
    <reaction evidence="1">
        <text>uroporphyrinogen III + 4 H(+) = coproporphyrinogen III + 4 CO2</text>
        <dbReference type="Rhea" id="RHEA:19865"/>
        <dbReference type="ChEBI" id="CHEBI:15378"/>
        <dbReference type="ChEBI" id="CHEBI:16526"/>
        <dbReference type="ChEBI" id="CHEBI:57308"/>
        <dbReference type="ChEBI" id="CHEBI:57309"/>
        <dbReference type="EC" id="4.1.1.37"/>
    </reaction>
</comment>
<comment type="pathway">
    <text evidence="1">Porphyrin-containing compound metabolism; protoporphyrin-IX biosynthesis; coproporphyrinogen-III from 5-aminolevulinate: step 4/4.</text>
</comment>
<comment type="subunit">
    <text evidence="1">Homodimer.</text>
</comment>
<comment type="subcellular location">
    <subcellularLocation>
        <location evidence="1">Cytoplasm</location>
    </subcellularLocation>
</comment>
<comment type="similarity">
    <text evidence="1">Belongs to the uroporphyrinogen decarboxylase family.</text>
</comment>
<organism>
    <name type="scientific">Escherichia coli O6:K15:H31 (strain 536 / UPEC)</name>
    <dbReference type="NCBI Taxonomy" id="362663"/>
    <lineage>
        <taxon>Bacteria</taxon>
        <taxon>Pseudomonadati</taxon>
        <taxon>Pseudomonadota</taxon>
        <taxon>Gammaproteobacteria</taxon>
        <taxon>Enterobacterales</taxon>
        <taxon>Enterobacteriaceae</taxon>
        <taxon>Escherichia</taxon>
    </lineage>
</organism>
<accession>Q0TA68</accession>
<sequence>MTELKNDRYLRALLRQPVDVTPVWMMRQAGRYLPEYKATRAQAGDFMSLCKNAELACEVTLQPLRRYPLDAAILFSDILTVPDAMGLGLYFEAGEGPRFTSPVTCKADVDKLPIPDPEDELGYVMNAVRTIRRELKGEVPLIGFSGSPWTLATYMVEGGSSKAFTVIKKMMYADPQALHALLDKLAKSVTLYLNAQIKAGAQAVMIFDTWGGVLTGRDYQQFSLYYMHKIVDGLLRENDGRRVPVTLFTKGGGQWLEAMAETGCDALGLDWTTDIADARRRVGNKVALQGNMDPSMLYAPPARIEEEVATILAGFGHGEGHVFNLGHGIHQDVLPEHAGVFVEAVHRLSEQYHR</sequence>
<keyword id="KW-0963">Cytoplasm</keyword>
<keyword id="KW-0210">Decarboxylase</keyword>
<keyword id="KW-0456">Lyase</keyword>
<keyword id="KW-0627">Porphyrin biosynthesis</keyword>
<name>DCUP_ECOL5</name>
<evidence type="ECO:0000255" key="1">
    <source>
        <dbReference type="HAMAP-Rule" id="MF_00218"/>
    </source>
</evidence>
<dbReference type="EC" id="4.1.1.37" evidence="1"/>
<dbReference type="EMBL" id="CP000247">
    <property type="protein sequence ID" value="ABG72161.1"/>
    <property type="molecule type" value="Genomic_DNA"/>
</dbReference>
<dbReference type="RefSeq" id="WP_000137654.1">
    <property type="nucleotide sequence ID" value="NC_008253.1"/>
</dbReference>
<dbReference type="SMR" id="Q0TA68"/>
<dbReference type="KEGG" id="ecp:ECP_4210"/>
<dbReference type="HOGENOM" id="CLU_040933_0_0_6"/>
<dbReference type="UniPathway" id="UPA00251">
    <property type="reaction ID" value="UER00321"/>
</dbReference>
<dbReference type="Proteomes" id="UP000009182">
    <property type="component" value="Chromosome"/>
</dbReference>
<dbReference type="GO" id="GO:0005829">
    <property type="term" value="C:cytosol"/>
    <property type="evidence" value="ECO:0007669"/>
    <property type="project" value="TreeGrafter"/>
</dbReference>
<dbReference type="GO" id="GO:0004853">
    <property type="term" value="F:uroporphyrinogen decarboxylase activity"/>
    <property type="evidence" value="ECO:0007669"/>
    <property type="project" value="UniProtKB-UniRule"/>
</dbReference>
<dbReference type="GO" id="GO:0019353">
    <property type="term" value="P:protoporphyrinogen IX biosynthetic process from glutamate"/>
    <property type="evidence" value="ECO:0007669"/>
    <property type="project" value="TreeGrafter"/>
</dbReference>
<dbReference type="CDD" id="cd00717">
    <property type="entry name" value="URO-D"/>
    <property type="match status" value="1"/>
</dbReference>
<dbReference type="FunFam" id="3.20.20.210:FF:000001">
    <property type="entry name" value="Uroporphyrinogen decarboxylase"/>
    <property type="match status" value="1"/>
</dbReference>
<dbReference type="Gene3D" id="3.20.20.210">
    <property type="match status" value="1"/>
</dbReference>
<dbReference type="HAMAP" id="MF_00218">
    <property type="entry name" value="URO_D"/>
    <property type="match status" value="1"/>
</dbReference>
<dbReference type="InterPro" id="IPR038071">
    <property type="entry name" value="UROD/MetE-like_sf"/>
</dbReference>
<dbReference type="InterPro" id="IPR006361">
    <property type="entry name" value="Uroporphyrinogen_deCO2ase_HemE"/>
</dbReference>
<dbReference type="InterPro" id="IPR000257">
    <property type="entry name" value="Uroporphyrinogen_deCOase"/>
</dbReference>
<dbReference type="NCBIfam" id="TIGR01464">
    <property type="entry name" value="hemE"/>
    <property type="match status" value="1"/>
</dbReference>
<dbReference type="PANTHER" id="PTHR21091">
    <property type="entry name" value="METHYLTETRAHYDROFOLATE:HOMOCYSTEINE METHYLTRANSFERASE RELATED"/>
    <property type="match status" value="1"/>
</dbReference>
<dbReference type="PANTHER" id="PTHR21091:SF169">
    <property type="entry name" value="UROPORPHYRINOGEN DECARBOXYLASE"/>
    <property type="match status" value="1"/>
</dbReference>
<dbReference type="Pfam" id="PF01208">
    <property type="entry name" value="URO-D"/>
    <property type="match status" value="1"/>
</dbReference>
<dbReference type="SUPFAM" id="SSF51726">
    <property type="entry name" value="UROD/MetE-like"/>
    <property type="match status" value="1"/>
</dbReference>
<dbReference type="PROSITE" id="PS00906">
    <property type="entry name" value="UROD_1"/>
    <property type="match status" value="1"/>
</dbReference>
<dbReference type="PROSITE" id="PS00907">
    <property type="entry name" value="UROD_2"/>
    <property type="match status" value="1"/>
</dbReference>